<reference key="1">
    <citation type="journal article" date="2010" name="PLoS ONE">
        <title>The complete genome sequence of Cupriavidus metallidurans strain CH34, a master survivalist in harsh and anthropogenic environments.</title>
        <authorList>
            <person name="Janssen P.J."/>
            <person name="Van Houdt R."/>
            <person name="Moors H."/>
            <person name="Monsieurs P."/>
            <person name="Morin N."/>
            <person name="Michaux A."/>
            <person name="Benotmane M.A."/>
            <person name="Leys N."/>
            <person name="Vallaeys T."/>
            <person name="Lapidus A."/>
            <person name="Monchy S."/>
            <person name="Medigue C."/>
            <person name="Taghavi S."/>
            <person name="McCorkle S."/>
            <person name="Dunn J."/>
            <person name="van der Lelie D."/>
            <person name="Mergeay M."/>
        </authorList>
    </citation>
    <scope>NUCLEOTIDE SEQUENCE [LARGE SCALE GENOMIC DNA]</scope>
    <source>
        <strain>ATCC 43123 / DSM 2839 / NBRC 102507 / CH34</strain>
    </source>
</reference>
<gene>
    <name type="ordered locus">Rmet_2899</name>
</gene>
<name>Y2899_CUPMC</name>
<accession>Q1LJA4</accession>
<dbReference type="EMBL" id="CP000352">
    <property type="protein sequence ID" value="ABF09772.1"/>
    <property type="molecule type" value="Genomic_DNA"/>
</dbReference>
<dbReference type="RefSeq" id="WP_011517448.1">
    <property type="nucleotide sequence ID" value="NC_007973.1"/>
</dbReference>
<dbReference type="SMR" id="Q1LJA4"/>
<dbReference type="KEGG" id="rme:Rmet_2899"/>
<dbReference type="eggNOG" id="COG1666">
    <property type="taxonomic scope" value="Bacteria"/>
</dbReference>
<dbReference type="HOGENOM" id="CLU_099839_1_0_4"/>
<dbReference type="Proteomes" id="UP000002429">
    <property type="component" value="Chromosome"/>
</dbReference>
<dbReference type="GO" id="GO:0005829">
    <property type="term" value="C:cytosol"/>
    <property type="evidence" value="ECO:0007669"/>
    <property type="project" value="TreeGrafter"/>
</dbReference>
<dbReference type="GO" id="GO:0000166">
    <property type="term" value="F:nucleotide binding"/>
    <property type="evidence" value="ECO:0007669"/>
    <property type="project" value="TreeGrafter"/>
</dbReference>
<dbReference type="CDD" id="cd11740">
    <property type="entry name" value="YajQ_like"/>
    <property type="match status" value="1"/>
</dbReference>
<dbReference type="Gene3D" id="3.30.70.860">
    <property type="match status" value="1"/>
</dbReference>
<dbReference type="Gene3D" id="3.30.70.990">
    <property type="entry name" value="YajQ-like, domain 2"/>
    <property type="match status" value="1"/>
</dbReference>
<dbReference type="HAMAP" id="MF_00632">
    <property type="entry name" value="YajQ"/>
    <property type="match status" value="1"/>
</dbReference>
<dbReference type="InterPro" id="IPR007551">
    <property type="entry name" value="DUF520"/>
</dbReference>
<dbReference type="InterPro" id="IPR035571">
    <property type="entry name" value="UPF0234-like_C"/>
</dbReference>
<dbReference type="InterPro" id="IPR035570">
    <property type="entry name" value="UPF0234_N"/>
</dbReference>
<dbReference type="InterPro" id="IPR036183">
    <property type="entry name" value="YajQ-like_sf"/>
</dbReference>
<dbReference type="NCBIfam" id="NF003819">
    <property type="entry name" value="PRK05412.1"/>
    <property type="match status" value="1"/>
</dbReference>
<dbReference type="PANTHER" id="PTHR30476">
    <property type="entry name" value="UPF0234 PROTEIN YAJQ"/>
    <property type="match status" value="1"/>
</dbReference>
<dbReference type="PANTHER" id="PTHR30476:SF0">
    <property type="entry name" value="UPF0234 PROTEIN YAJQ"/>
    <property type="match status" value="1"/>
</dbReference>
<dbReference type="Pfam" id="PF04461">
    <property type="entry name" value="DUF520"/>
    <property type="match status" value="1"/>
</dbReference>
<dbReference type="SUPFAM" id="SSF89963">
    <property type="entry name" value="YajQ-like"/>
    <property type="match status" value="2"/>
</dbReference>
<comment type="function">
    <text evidence="1">Nucleotide-binding protein.</text>
</comment>
<comment type="similarity">
    <text evidence="1">Belongs to the YajQ family.</text>
</comment>
<evidence type="ECO:0000255" key="1">
    <source>
        <dbReference type="HAMAP-Rule" id="MF_00632"/>
    </source>
</evidence>
<feature type="chain" id="PRO_0000261966" description="Nucleotide-binding protein Rmet_2899">
    <location>
        <begin position="1"/>
        <end position="161"/>
    </location>
</feature>
<sequence>MPSFDVVCEANMVEVKNAVEQANKEISTRFDFKGSDARVEQKEGELTAFADDDFKLDQVKDVLINKMAKRNVDVRFLDYGKVEKISGDKVKQVITIKKGVTGDLAKKIVRMIKDSKIKVQGSIQGDAVRVSGTKRDDLQAVIAMLRKDANEAPLDFNNFRD</sequence>
<proteinExistence type="inferred from homology"/>
<organism>
    <name type="scientific">Cupriavidus metallidurans (strain ATCC 43123 / DSM 2839 / NBRC 102507 / CH34)</name>
    <name type="common">Ralstonia metallidurans</name>
    <dbReference type="NCBI Taxonomy" id="266264"/>
    <lineage>
        <taxon>Bacteria</taxon>
        <taxon>Pseudomonadati</taxon>
        <taxon>Pseudomonadota</taxon>
        <taxon>Betaproteobacteria</taxon>
        <taxon>Burkholderiales</taxon>
        <taxon>Burkholderiaceae</taxon>
        <taxon>Cupriavidus</taxon>
    </lineage>
</organism>
<protein>
    <recommendedName>
        <fullName evidence="1">Nucleotide-binding protein Rmet_2899</fullName>
    </recommendedName>
</protein>
<keyword id="KW-0547">Nucleotide-binding</keyword>
<keyword id="KW-1185">Reference proteome</keyword>